<protein>
    <recommendedName>
        <fullName>Transmembrane protein 237</fullName>
    </recommendedName>
</protein>
<evidence type="ECO:0000250" key="1"/>
<evidence type="ECO:0000255" key="2"/>
<evidence type="ECO:0000256" key="3">
    <source>
        <dbReference type="SAM" id="MobiDB-lite"/>
    </source>
</evidence>
<evidence type="ECO:0000305" key="4"/>
<accession>F1NVK6</accession>
<gene>
    <name type="primary">TMEM237</name>
</gene>
<proteinExistence type="inferred from homology"/>
<keyword id="KW-0966">Cell projection</keyword>
<keyword id="KW-0969">Cilium</keyword>
<keyword id="KW-0970">Cilium biogenesis/degradation</keyword>
<keyword id="KW-0472">Membrane</keyword>
<keyword id="KW-1185">Reference proteome</keyword>
<keyword id="KW-0812">Transmembrane</keyword>
<keyword id="KW-1133">Transmembrane helix</keyword>
<name>TM237_CHICK</name>
<dbReference type="EMBL" id="AADN02019863">
    <property type="status" value="NOT_ANNOTATED_CDS"/>
    <property type="molecule type" value="Genomic_DNA"/>
</dbReference>
<dbReference type="FunCoup" id="F1NVK6">
    <property type="interactions" value="1056"/>
</dbReference>
<dbReference type="STRING" id="9031.ENSGALP00000058753"/>
<dbReference type="PaxDb" id="9031-ENSGALP00000013639"/>
<dbReference type="VEuPathDB" id="HostDB:geneid_424084"/>
<dbReference type="eggNOG" id="ENOG502QTW0">
    <property type="taxonomic scope" value="Eukaryota"/>
</dbReference>
<dbReference type="InParanoid" id="F1NVK6"/>
<dbReference type="OrthoDB" id="550113at2759"/>
<dbReference type="Proteomes" id="UP000000539">
    <property type="component" value="Unassembled WGS sequence"/>
</dbReference>
<dbReference type="GO" id="GO:0035869">
    <property type="term" value="C:ciliary transition zone"/>
    <property type="evidence" value="ECO:0000250"/>
    <property type="project" value="UniProtKB"/>
</dbReference>
<dbReference type="GO" id="GO:0016020">
    <property type="term" value="C:membrane"/>
    <property type="evidence" value="ECO:0007669"/>
    <property type="project" value="UniProtKB-SubCell"/>
</dbReference>
<dbReference type="GO" id="GO:0060271">
    <property type="term" value="P:cilium assembly"/>
    <property type="evidence" value="ECO:0000250"/>
    <property type="project" value="UniProtKB"/>
</dbReference>
<dbReference type="GO" id="GO:0030111">
    <property type="term" value="P:regulation of Wnt signaling pathway"/>
    <property type="evidence" value="ECO:0000250"/>
    <property type="project" value="UniProtKB"/>
</dbReference>
<dbReference type="InterPro" id="IPR029409">
    <property type="entry name" value="TMEM237"/>
</dbReference>
<dbReference type="PANTHER" id="PTHR28388">
    <property type="entry name" value="TRANSMEMBRANE PROTEIN 237"/>
    <property type="match status" value="1"/>
</dbReference>
<dbReference type="PANTHER" id="PTHR28388:SF1">
    <property type="entry name" value="TRANSMEMBRANE PROTEIN 237"/>
    <property type="match status" value="1"/>
</dbReference>
<dbReference type="Pfam" id="PF15383">
    <property type="entry name" value="TMEM237"/>
    <property type="match status" value="1"/>
</dbReference>
<feature type="chain" id="PRO_0000415830" description="Transmembrane protein 237">
    <location>
        <begin position="1"/>
        <end position="394"/>
    </location>
</feature>
<feature type="transmembrane region" description="Helical" evidence="2">
    <location>
        <begin position="213"/>
        <end position="233"/>
    </location>
</feature>
<feature type="transmembrane region" description="Helical" evidence="2">
    <location>
        <begin position="254"/>
        <end position="274"/>
    </location>
</feature>
<feature type="transmembrane region" description="Helical" evidence="2">
    <location>
        <begin position="288"/>
        <end position="308"/>
    </location>
</feature>
<feature type="transmembrane region" description="Helical" evidence="2">
    <location>
        <begin position="344"/>
        <end position="364"/>
    </location>
</feature>
<feature type="region of interest" description="Disordered" evidence="3">
    <location>
        <begin position="1"/>
        <end position="135"/>
    </location>
</feature>
<feature type="compositionally biased region" description="Polar residues" evidence="3">
    <location>
        <begin position="80"/>
        <end position="97"/>
    </location>
</feature>
<feature type="compositionally biased region" description="Basic residues" evidence="3">
    <location>
        <begin position="110"/>
        <end position="119"/>
    </location>
</feature>
<comment type="function">
    <text evidence="1">Component of the transition zone in primary cilia. Required for ciliogenesis (By similarity).</text>
</comment>
<comment type="subcellular location">
    <subcellularLocation>
        <location evidence="4">Membrane</location>
        <topology evidence="4">Multi-pass membrane protein</topology>
    </subcellularLocation>
    <subcellularLocation>
        <location evidence="1">Cell projection</location>
        <location evidence="1">Cilium</location>
    </subcellularLocation>
    <text evidence="1">Localizes to the transition zone.</text>
</comment>
<comment type="similarity">
    <text evidence="4">Belongs to the TMEM237 family.</text>
</comment>
<organism>
    <name type="scientific">Gallus gallus</name>
    <name type="common">Chicken</name>
    <dbReference type="NCBI Taxonomy" id="9031"/>
    <lineage>
        <taxon>Eukaryota</taxon>
        <taxon>Metazoa</taxon>
        <taxon>Chordata</taxon>
        <taxon>Craniata</taxon>
        <taxon>Vertebrata</taxon>
        <taxon>Euteleostomi</taxon>
        <taxon>Archelosauria</taxon>
        <taxon>Archosauria</taxon>
        <taxon>Dinosauria</taxon>
        <taxon>Saurischia</taxon>
        <taxon>Theropoda</taxon>
        <taxon>Coelurosauria</taxon>
        <taxon>Aves</taxon>
        <taxon>Neognathae</taxon>
        <taxon>Galloanserae</taxon>
        <taxon>Galliformes</taxon>
        <taxon>Phasianidae</taxon>
        <taxon>Phasianinae</taxon>
        <taxon>Gallus</taxon>
    </lineage>
</organism>
<sequence>MGKKQVCPPRALPPVPSFCSADDIPLSRPKKRKPKGKTPLDDIVQATVRRQSESSEPLTPEPQDVPPQRKRKKKKVPPDSETSFTQQNTASLFQNGNGVDVPEAEETVVRKQRKRTKKARPAETHSSNELEVEEDDIIEDEHRRSPDQQPVFAAPTGISQPVSKVFVEKNRRFQAADRAELIKTTENINVLLDVKSSWTTRDVALSVHRSFRVIGLFTHGFLAGYAVWNIVVIYILAGNQLTTVSNLLQQYKMLAYPAQSLFYLLLSISTVSAFDRIDLAKASVALRGFLTLDPAALASFLYFTALILSLSQQMTCDRINLYTPPSENGSIWTAGMEEEILQPWIVVNLVVSILVGASWIFLSYRPELDHSEELMFHTEIEEFPQDEREMLKSQ</sequence>
<reference key="1">
    <citation type="journal article" date="2004" name="Nature">
        <title>Sequence and comparative analysis of the chicken genome provide unique perspectives on vertebrate evolution.</title>
        <authorList>
            <person name="Hillier L.W."/>
            <person name="Miller W."/>
            <person name="Birney E."/>
            <person name="Warren W."/>
            <person name="Hardison R.C."/>
            <person name="Ponting C.P."/>
            <person name="Bork P."/>
            <person name="Burt D.W."/>
            <person name="Groenen M.A.M."/>
            <person name="Delany M.E."/>
            <person name="Dodgson J.B."/>
            <person name="Chinwalla A.T."/>
            <person name="Cliften P.F."/>
            <person name="Clifton S.W."/>
            <person name="Delehaunty K.D."/>
            <person name="Fronick C."/>
            <person name="Fulton R.S."/>
            <person name="Graves T.A."/>
            <person name="Kremitzki C."/>
            <person name="Layman D."/>
            <person name="Magrini V."/>
            <person name="McPherson J.D."/>
            <person name="Miner T.L."/>
            <person name="Minx P."/>
            <person name="Nash W.E."/>
            <person name="Nhan M.N."/>
            <person name="Nelson J.O."/>
            <person name="Oddy L.G."/>
            <person name="Pohl C.S."/>
            <person name="Randall-Maher J."/>
            <person name="Smith S.M."/>
            <person name="Wallis J.W."/>
            <person name="Yang S.-P."/>
            <person name="Romanov M.N."/>
            <person name="Rondelli C.M."/>
            <person name="Paton B."/>
            <person name="Smith J."/>
            <person name="Morrice D."/>
            <person name="Daniels L."/>
            <person name="Tempest H.G."/>
            <person name="Robertson L."/>
            <person name="Masabanda J.S."/>
            <person name="Griffin D.K."/>
            <person name="Vignal A."/>
            <person name="Fillon V."/>
            <person name="Jacobbson L."/>
            <person name="Kerje S."/>
            <person name="Andersson L."/>
            <person name="Crooijmans R.P."/>
            <person name="Aerts J."/>
            <person name="van der Poel J.J."/>
            <person name="Ellegren H."/>
            <person name="Caldwell R.B."/>
            <person name="Hubbard S.J."/>
            <person name="Grafham D.V."/>
            <person name="Kierzek A.M."/>
            <person name="McLaren S.R."/>
            <person name="Overton I.M."/>
            <person name="Arakawa H."/>
            <person name="Beattie K.J."/>
            <person name="Bezzubov Y."/>
            <person name="Boardman P.E."/>
            <person name="Bonfield J.K."/>
            <person name="Croning M.D.R."/>
            <person name="Davies R.M."/>
            <person name="Francis M.D."/>
            <person name="Humphray S.J."/>
            <person name="Scott C.E."/>
            <person name="Taylor R.G."/>
            <person name="Tickle C."/>
            <person name="Brown W.R.A."/>
            <person name="Rogers J."/>
            <person name="Buerstedde J.-M."/>
            <person name="Wilson S.A."/>
            <person name="Stubbs L."/>
            <person name="Ovcharenko I."/>
            <person name="Gordon L."/>
            <person name="Lucas S."/>
            <person name="Miller M.M."/>
            <person name="Inoko H."/>
            <person name="Shiina T."/>
            <person name="Kaufman J."/>
            <person name="Salomonsen J."/>
            <person name="Skjoedt K."/>
            <person name="Wong G.K.-S."/>
            <person name="Wang J."/>
            <person name="Liu B."/>
            <person name="Wang J."/>
            <person name="Yu J."/>
            <person name="Yang H."/>
            <person name="Nefedov M."/>
            <person name="Koriabine M."/>
            <person name="Dejong P.J."/>
            <person name="Goodstadt L."/>
            <person name="Webber C."/>
            <person name="Dickens N.J."/>
            <person name="Letunic I."/>
            <person name="Suyama M."/>
            <person name="Torrents D."/>
            <person name="von Mering C."/>
            <person name="Zdobnov E.M."/>
            <person name="Makova K."/>
            <person name="Nekrutenko A."/>
            <person name="Elnitski L."/>
            <person name="Eswara P."/>
            <person name="King D.C."/>
            <person name="Yang S.-P."/>
            <person name="Tyekucheva S."/>
            <person name="Radakrishnan A."/>
            <person name="Harris R.S."/>
            <person name="Chiaromonte F."/>
            <person name="Taylor J."/>
            <person name="He J."/>
            <person name="Rijnkels M."/>
            <person name="Griffiths-Jones S."/>
            <person name="Ureta-Vidal A."/>
            <person name="Hoffman M.M."/>
            <person name="Severin J."/>
            <person name="Searle S.M.J."/>
            <person name="Law A.S."/>
            <person name="Speed D."/>
            <person name="Waddington D."/>
            <person name="Cheng Z."/>
            <person name="Tuzun E."/>
            <person name="Eichler E."/>
            <person name="Bao Z."/>
            <person name="Flicek P."/>
            <person name="Shteynberg D.D."/>
            <person name="Brent M.R."/>
            <person name="Bye J.M."/>
            <person name="Huckle E.J."/>
            <person name="Chatterji S."/>
            <person name="Dewey C."/>
            <person name="Pachter L."/>
            <person name="Kouranov A."/>
            <person name="Mourelatos Z."/>
            <person name="Hatzigeorgiou A.G."/>
            <person name="Paterson A.H."/>
            <person name="Ivarie R."/>
            <person name="Brandstrom M."/>
            <person name="Axelsson E."/>
            <person name="Backstrom N."/>
            <person name="Berlin S."/>
            <person name="Webster M.T."/>
            <person name="Pourquie O."/>
            <person name="Reymond A."/>
            <person name="Ucla C."/>
            <person name="Antonarakis S.E."/>
            <person name="Long M."/>
            <person name="Emerson J.J."/>
            <person name="Betran E."/>
            <person name="Dupanloup I."/>
            <person name="Kaessmann H."/>
            <person name="Hinrichs A.S."/>
            <person name="Bejerano G."/>
            <person name="Furey T.S."/>
            <person name="Harte R.A."/>
            <person name="Raney B."/>
            <person name="Siepel A."/>
            <person name="Kent W.J."/>
            <person name="Haussler D."/>
            <person name="Eyras E."/>
            <person name="Castelo R."/>
            <person name="Abril J.F."/>
            <person name="Castellano S."/>
            <person name="Camara F."/>
            <person name="Parra G."/>
            <person name="Guigo R."/>
            <person name="Bourque G."/>
            <person name="Tesler G."/>
            <person name="Pevzner P.A."/>
            <person name="Smit A."/>
            <person name="Fulton L.A."/>
            <person name="Mardis E.R."/>
            <person name="Wilson R.K."/>
        </authorList>
    </citation>
    <scope>NUCLEOTIDE SEQUENCE [LARGE SCALE GENOMIC DNA]</scope>
    <source>
        <strain>Red jungle fowl</strain>
    </source>
</reference>